<accession>Q1ACG6</accession>
<protein>
    <recommendedName>
        <fullName evidence="1">Small ribosomal subunit protein uS11c</fullName>
    </recommendedName>
    <alternativeName>
        <fullName evidence="2">30S ribosomal protein S11, chloroplastic</fullName>
    </alternativeName>
</protein>
<sequence length="130" mass="14354">MIRPIKKITLRKTKKKSPKGVIHIQASFNNTIVTITDLRGQVISWSSSGACGFKGAKKSTAYAAQIATENAIKQWTDQNTKQAEVMMSGPGPGRETALRAIRNSRVILSFIRDVTPIPHNGCRPPKKRRV</sequence>
<geneLocation type="chloroplast"/>
<comment type="subunit">
    <text evidence="1">Part of the 30S ribosomal subunit.</text>
</comment>
<comment type="subcellular location">
    <subcellularLocation>
        <location>Plastid</location>
        <location>Chloroplast</location>
    </subcellularLocation>
</comment>
<comment type="similarity">
    <text evidence="1">Belongs to the universal ribosomal protein uS11 family.</text>
</comment>
<organism>
    <name type="scientific">Chara vulgaris</name>
    <name type="common">Common stonewort</name>
    <dbReference type="NCBI Taxonomy" id="55564"/>
    <lineage>
        <taxon>Eukaryota</taxon>
        <taxon>Viridiplantae</taxon>
        <taxon>Streptophyta</taxon>
        <taxon>Charophyceae</taxon>
        <taxon>Charales</taxon>
        <taxon>Characeae</taxon>
        <taxon>Chara</taxon>
    </lineage>
</organism>
<dbReference type="EMBL" id="DQ229107">
    <property type="protein sequence ID" value="ABA61977.1"/>
    <property type="molecule type" value="Genomic_DNA"/>
</dbReference>
<dbReference type="RefSeq" id="YP_635781.1">
    <property type="nucleotide sequence ID" value="NC_008097.1"/>
</dbReference>
<dbReference type="SMR" id="Q1ACG6"/>
<dbReference type="GeneID" id="4100200"/>
<dbReference type="GO" id="GO:0009507">
    <property type="term" value="C:chloroplast"/>
    <property type="evidence" value="ECO:0007669"/>
    <property type="project" value="UniProtKB-SubCell"/>
</dbReference>
<dbReference type="GO" id="GO:1990904">
    <property type="term" value="C:ribonucleoprotein complex"/>
    <property type="evidence" value="ECO:0007669"/>
    <property type="project" value="UniProtKB-KW"/>
</dbReference>
<dbReference type="GO" id="GO:0005840">
    <property type="term" value="C:ribosome"/>
    <property type="evidence" value="ECO:0007669"/>
    <property type="project" value="UniProtKB-KW"/>
</dbReference>
<dbReference type="GO" id="GO:0019843">
    <property type="term" value="F:rRNA binding"/>
    <property type="evidence" value="ECO:0007669"/>
    <property type="project" value="UniProtKB-UniRule"/>
</dbReference>
<dbReference type="GO" id="GO:0003735">
    <property type="term" value="F:structural constituent of ribosome"/>
    <property type="evidence" value="ECO:0007669"/>
    <property type="project" value="InterPro"/>
</dbReference>
<dbReference type="GO" id="GO:0006412">
    <property type="term" value="P:translation"/>
    <property type="evidence" value="ECO:0007669"/>
    <property type="project" value="UniProtKB-UniRule"/>
</dbReference>
<dbReference type="Gene3D" id="3.30.420.80">
    <property type="entry name" value="Ribosomal protein S11"/>
    <property type="match status" value="1"/>
</dbReference>
<dbReference type="HAMAP" id="MF_01310">
    <property type="entry name" value="Ribosomal_uS11"/>
    <property type="match status" value="1"/>
</dbReference>
<dbReference type="InterPro" id="IPR001971">
    <property type="entry name" value="Ribosomal_uS11"/>
</dbReference>
<dbReference type="InterPro" id="IPR019981">
    <property type="entry name" value="Ribosomal_uS11_bac-type"/>
</dbReference>
<dbReference type="InterPro" id="IPR036967">
    <property type="entry name" value="Ribosomal_uS11_sf"/>
</dbReference>
<dbReference type="NCBIfam" id="NF003698">
    <property type="entry name" value="PRK05309.1"/>
    <property type="match status" value="1"/>
</dbReference>
<dbReference type="NCBIfam" id="TIGR03632">
    <property type="entry name" value="uS11_bact"/>
    <property type="match status" value="1"/>
</dbReference>
<dbReference type="PANTHER" id="PTHR11759">
    <property type="entry name" value="40S RIBOSOMAL PROTEIN S14/30S RIBOSOMAL PROTEIN S11"/>
    <property type="match status" value="1"/>
</dbReference>
<dbReference type="Pfam" id="PF00411">
    <property type="entry name" value="Ribosomal_S11"/>
    <property type="match status" value="1"/>
</dbReference>
<dbReference type="PIRSF" id="PIRSF002131">
    <property type="entry name" value="Ribosomal_S11"/>
    <property type="match status" value="1"/>
</dbReference>
<dbReference type="SUPFAM" id="SSF53137">
    <property type="entry name" value="Translational machinery components"/>
    <property type="match status" value="1"/>
</dbReference>
<name>RR11_CHAVU</name>
<proteinExistence type="inferred from homology"/>
<keyword id="KW-0150">Chloroplast</keyword>
<keyword id="KW-0934">Plastid</keyword>
<keyword id="KW-0687">Ribonucleoprotein</keyword>
<keyword id="KW-0689">Ribosomal protein</keyword>
<keyword id="KW-0694">RNA-binding</keyword>
<keyword id="KW-0699">rRNA-binding</keyword>
<reference key="1">
    <citation type="journal article" date="2006" name="Mol. Biol. Evol.">
        <title>The chloroplast genome sequence of Chara vulgaris sheds new light into the closest green algal relatives of land plants.</title>
        <authorList>
            <person name="Turmel M."/>
            <person name="Otis C."/>
            <person name="Lemieux C."/>
        </authorList>
    </citation>
    <scope>NUCLEOTIDE SEQUENCE [LARGE SCALE GENOMIC DNA]</scope>
</reference>
<feature type="chain" id="PRO_0000276642" description="Small ribosomal subunit protein uS11c">
    <location>
        <begin position="1"/>
        <end position="130"/>
    </location>
</feature>
<gene>
    <name evidence="1" type="primary">rps11</name>
</gene>
<evidence type="ECO:0000255" key="1">
    <source>
        <dbReference type="HAMAP-Rule" id="MF_01310"/>
    </source>
</evidence>
<evidence type="ECO:0000305" key="2"/>